<accession>A5UY19</accession>
<gene>
    <name evidence="1" type="primary">mnmE</name>
    <name evidence="1" type="synonym">trmE</name>
    <name type="ordered locus">RoseRS_3161</name>
</gene>
<name>MNME_ROSS1</name>
<reference key="1">
    <citation type="submission" date="2007-04" db="EMBL/GenBank/DDBJ databases">
        <title>Complete sequence of Roseiflexus sp. RS-1.</title>
        <authorList>
            <consortium name="US DOE Joint Genome Institute"/>
            <person name="Copeland A."/>
            <person name="Lucas S."/>
            <person name="Lapidus A."/>
            <person name="Barry K."/>
            <person name="Detter J.C."/>
            <person name="Glavina del Rio T."/>
            <person name="Hammon N."/>
            <person name="Israni S."/>
            <person name="Dalin E."/>
            <person name="Tice H."/>
            <person name="Pitluck S."/>
            <person name="Chertkov O."/>
            <person name="Brettin T."/>
            <person name="Bruce D."/>
            <person name="Han C."/>
            <person name="Schmutz J."/>
            <person name="Larimer F."/>
            <person name="Land M."/>
            <person name="Hauser L."/>
            <person name="Kyrpides N."/>
            <person name="Mikhailova N."/>
            <person name="Bryant D.A."/>
            <person name="Richardson P."/>
        </authorList>
    </citation>
    <scope>NUCLEOTIDE SEQUENCE [LARGE SCALE GENOMIC DNA]</scope>
    <source>
        <strain>RS-1</strain>
    </source>
</reference>
<keyword id="KW-0963">Cytoplasm</keyword>
<keyword id="KW-0342">GTP-binding</keyword>
<keyword id="KW-0378">Hydrolase</keyword>
<keyword id="KW-0460">Magnesium</keyword>
<keyword id="KW-0479">Metal-binding</keyword>
<keyword id="KW-0547">Nucleotide-binding</keyword>
<keyword id="KW-0630">Potassium</keyword>
<keyword id="KW-0819">tRNA processing</keyword>
<feature type="chain" id="PRO_0000345897" description="tRNA modification GTPase MnmE">
    <location>
        <begin position="1"/>
        <end position="461"/>
    </location>
</feature>
<feature type="domain" description="TrmE-type G">
    <location>
        <begin position="216"/>
        <end position="383"/>
    </location>
</feature>
<feature type="binding site" evidence="1">
    <location>
        <position position="23"/>
    </location>
    <ligand>
        <name>(6S)-5-formyl-5,6,7,8-tetrahydrofolate</name>
        <dbReference type="ChEBI" id="CHEBI:57457"/>
    </ligand>
</feature>
<feature type="binding site" evidence="1">
    <location>
        <position position="84"/>
    </location>
    <ligand>
        <name>(6S)-5-formyl-5,6,7,8-tetrahydrofolate</name>
        <dbReference type="ChEBI" id="CHEBI:57457"/>
    </ligand>
</feature>
<feature type="binding site" evidence="1">
    <location>
        <position position="123"/>
    </location>
    <ligand>
        <name>(6S)-5-formyl-5,6,7,8-tetrahydrofolate</name>
        <dbReference type="ChEBI" id="CHEBI:57457"/>
    </ligand>
</feature>
<feature type="binding site" evidence="1">
    <location>
        <begin position="226"/>
        <end position="231"/>
    </location>
    <ligand>
        <name>GTP</name>
        <dbReference type="ChEBI" id="CHEBI:37565"/>
    </ligand>
</feature>
<feature type="binding site" evidence="1">
    <location>
        <position position="226"/>
    </location>
    <ligand>
        <name>K(+)</name>
        <dbReference type="ChEBI" id="CHEBI:29103"/>
    </ligand>
</feature>
<feature type="binding site" evidence="1">
    <location>
        <position position="230"/>
    </location>
    <ligand>
        <name>Mg(2+)</name>
        <dbReference type="ChEBI" id="CHEBI:18420"/>
    </ligand>
</feature>
<feature type="binding site" evidence="1">
    <location>
        <begin position="245"/>
        <end position="251"/>
    </location>
    <ligand>
        <name>GTP</name>
        <dbReference type="ChEBI" id="CHEBI:37565"/>
    </ligand>
</feature>
<feature type="binding site" evidence="1">
    <location>
        <position position="245"/>
    </location>
    <ligand>
        <name>K(+)</name>
        <dbReference type="ChEBI" id="CHEBI:29103"/>
    </ligand>
</feature>
<feature type="binding site" evidence="1">
    <location>
        <position position="247"/>
    </location>
    <ligand>
        <name>K(+)</name>
        <dbReference type="ChEBI" id="CHEBI:29103"/>
    </ligand>
</feature>
<feature type="binding site" evidence="1">
    <location>
        <position position="250"/>
    </location>
    <ligand>
        <name>K(+)</name>
        <dbReference type="ChEBI" id="CHEBI:29103"/>
    </ligand>
</feature>
<feature type="binding site" evidence="1">
    <location>
        <position position="251"/>
    </location>
    <ligand>
        <name>Mg(2+)</name>
        <dbReference type="ChEBI" id="CHEBI:18420"/>
    </ligand>
</feature>
<feature type="binding site" evidence="1">
    <location>
        <begin position="270"/>
        <end position="273"/>
    </location>
    <ligand>
        <name>GTP</name>
        <dbReference type="ChEBI" id="CHEBI:37565"/>
    </ligand>
</feature>
<feature type="binding site" evidence="1">
    <location>
        <position position="461"/>
    </location>
    <ligand>
        <name>(6S)-5-formyl-5,6,7,8-tetrahydrofolate</name>
        <dbReference type="ChEBI" id="CHEBI:57457"/>
    </ligand>
</feature>
<comment type="function">
    <text evidence="1">Exhibits a very high intrinsic GTPase hydrolysis rate. Involved in the addition of a carboxymethylaminomethyl (cmnm) group at the wobble position (U34) of certain tRNAs, forming tRNA-cmnm(5)s(2)U34.</text>
</comment>
<comment type="cofactor">
    <cofactor evidence="1">
        <name>K(+)</name>
        <dbReference type="ChEBI" id="CHEBI:29103"/>
    </cofactor>
    <text evidence="1">Binds 1 potassium ion per subunit.</text>
</comment>
<comment type="subunit">
    <text evidence="1">Homodimer. Heterotetramer of two MnmE and two MnmG subunits.</text>
</comment>
<comment type="subcellular location">
    <subcellularLocation>
        <location evidence="1">Cytoplasm</location>
    </subcellularLocation>
</comment>
<comment type="similarity">
    <text evidence="1">Belongs to the TRAFAC class TrmE-Era-EngA-EngB-Septin-like GTPase superfamily. TrmE GTPase family.</text>
</comment>
<comment type="sequence caution" evidence="2">
    <conflict type="erroneous initiation">
        <sequence resource="EMBL-CDS" id="ABQ91522"/>
    </conflict>
</comment>
<evidence type="ECO:0000255" key="1">
    <source>
        <dbReference type="HAMAP-Rule" id="MF_00379"/>
    </source>
</evidence>
<evidence type="ECO:0000305" key="2"/>
<organism>
    <name type="scientific">Roseiflexus sp. (strain RS-1)</name>
    <dbReference type="NCBI Taxonomy" id="357808"/>
    <lineage>
        <taxon>Bacteria</taxon>
        <taxon>Bacillati</taxon>
        <taxon>Chloroflexota</taxon>
        <taxon>Chloroflexia</taxon>
        <taxon>Chloroflexales</taxon>
        <taxon>Roseiflexineae</taxon>
        <taxon>Roseiflexaceae</taxon>
        <taxon>Roseiflexus</taxon>
    </lineage>
</organism>
<dbReference type="EC" id="3.6.-.-" evidence="1"/>
<dbReference type="EMBL" id="CP000686">
    <property type="protein sequence ID" value="ABQ91522.1"/>
    <property type="status" value="ALT_INIT"/>
    <property type="molecule type" value="Genomic_DNA"/>
</dbReference>
<dbReference type="RefSeq" id="WP_041333916.1">
    <property type="nucleotide sequence ID" value="NC_009523.1"/>
</dbReference>
<dbReference type="SMR" id="A5UY19"/>
<dbReference type="STRING" id="357808.RoseRS_3161"/>
<dbReference type="KEGG" id="rrs:RoseRS_3161"/>
<dbReference type="eggNOG" id="COG0486">
    <property type="taxonomic scope" value="Bacteria"/>
</dbReference>
<dbReference type="HOGENOM" id="CLU_019624_4_1_0"/>
<dbReference type="OrthoDB" id="9805918at2"/>
<dbReference type="Proteomes" id="UP000006554">
    <property type="component" value="Chromosome"/>
</dbReference>
<dbReference type="GO" id="GO:0005829">
    <property type="term" value="C:cytosol"/>
    <property type="evidence" value="ECO:0007669"/>
    <property type="project" value="TreeGrafter"/>
</dbReference>
<dbReference type="GO" id="GO:0005525">
    <property type="term" value="F:GTP binding"/>
    <property type="evidence" value="ECO:0007669"/>
    <property type="project" value="UniProtKB-UniRule"/>
</dbReference>
<dbReference type="GO" id="GO:0003924">
    <property type="term" value="F:GTPase activity"/>
    <property type="evidence" value="ECO:0007669"/>
    <property type="project" value="UniProtKB-UniRule"/>
</dbReference>
<dbReference type="GO" id="GO:0046872">
    <property type="term" value="F:metal ion binding"/>
    <property type="evidence" value="ECO:0007669"/>
    <property type="project" value="UniProtKB-KW"/>
</dbReference>
<dbReference type="GO" id="GO:0030488">
    <property type="term" value="P:tRNA methylation"/>
    <property type="evidence" value="ECO:0007669"/>
    <property type="project" value="TreeGrafter"/>
</dbReference>
<dbReference type="GO" id="GO:0002098">
    <property type="term" value="P:tRNA wobble uridine modification"/>
    <property type="evidence" value="ECO:0007669"/>
    <property type="project" value="TreeGrafter"/>
</dbReference>
<dbReference type="CDD" id="cd04164">
    <property type="entry name" value="trmE"/>
    <property type="match status" value="1"/>
</dbReference>
<dbReference type="CDD" id="cd14858">
    <property type="entry name" value="TrmE_N"/>
    <property type="match status" value="1"/>
</dbReference>
<dbReference type="FunFam" id="3.30.1360.120:FF:000003">
    <property type="entry name" value="tRNA modification GTPase MnmE"/>
    <property type="match status" value="1"/>
</dbReference>
<dbReference type="FunFam" id="3.40.50.300:FF:001376">
    <property type="entry name" value="tRNA modification GTPase MnmE"/>
    <property type="match status" value="1"/>
</dbReference>
<dbReference type="Gene3D" id="3.40.50.300">
    <property type="entry name" value="P-loop containing nucleotide triphosphate hydrolases"/>
    <property type="match status" value="1"/>
</dbReference>
<dbReference type="Gene3D" id="3.30.1360.120">
    <property type="entry name" value="Probable tRNA modification gtpase trme, domain 1"/>
    <property type="match status" value="1"/>
</dbReference>
<dbReference type="Gene3D" id="1.20.120.430">
    <property type="entry name" value="tRNA modification GTPase MnmE domain 2"/>
    <property type="match status" value="1"/>
</dbReference>
<dbReference type="HAMAP" id="MF_00379">
    <property type="entry name" value="GTPase_MnmE"/>
    <property type="match status" value="1"/>
</dbReference>
<dbReference type="InterPro" id="IPR031168">
    <property type="entry name" value="G_TrmE"/>
</dbReference>
<dbReference type="InterPro" id="IPR006073">
    <property type="entry name" value="GTP-bd"/>
</dbReference>
<dbReference type="InterPro" id="IPR018948">
    <property type="entry name" value="GTP-bd_TrmE_N"/>
</dbReference>
<dbReference type="InterPro" id="IPR004520">
    <property type="entry name" value="GTPase_MnmE"/>
</dbReference>
<dbReference type="InterPro" id="IPR027368">
    <property type="entry name" value="MnmE_dom2"/>
</dbReference>
<dbReference type="InterPro" id="IPR025867">
    <property type="entry name" value="MnmE_helical"/>
</dbReference>
<dbReference type="InterPro" id="IPR027417">
    <property type="entry name" value="P-loop_NTPase"/>
</dbReference>
<dbReference type="InterPro" id="IPR005225">
    <property type="entry name" value="Small_GTP-bd"/>
</dbReference>
<dbReference type="InterPro" id="IPR027266">
    <property type="entry name" value="TrmE/GcvT_dom1"/>
</dbReference>
<dbReference type="NCBIfam" id="TIGR00450">
    <property type="entry name" value="mnmE_trmE_thdF"/>
    <property type="match status" value="1"/>
</dbReference>
<dbReference type="NCBIfam" id="TIGR00231">
    <property type="entry name" value="small_GTP"/>
    <property type="match status" value="1"/>
</dbReference>
<dbReference type="PANTHER" id="PTHR42714">
    <property type="entry name" value="TRNA MODIFICATION GTPASE GTPBP3"/>
    <property type="match status" value="1"/>
</dbReference>
<dbReference type="PANTHER" id="PTHR42714:SF2">
    <property type="entry name" value="TRNA MODIFICATION GTPASE GTPBP3, MITOCHONDRIAL"/>
    <property type="match status" value="1"/>
</dbReference>
<dbReference type="Pfam" id="PF01926">
    <property type="entry name" value="MMR_HSR1"/>
    <property type="match status" value="1"/>
</dbReference>
<dbReference type="Pfam" id="PF12631">
    <property type="entry name" value="MnmE_helical"/>
    <property type="match status" value="1"/>
</dbReference>
<dbReference type="Pfam" id="PF10396">
    <property type="entry name" value="TrmE_N"/>
    <property type="match status" value="1"/>
</dbReference>
<dbReference type="PRINTS" id="PR00326">
    <property type="entry name" value="GTP1OBG"/>
</dbReference>
<dbReference type="SUPFAM" id="SSF52540">
    <property type="entry name" value="P-loop containing nucleoside triphosphate hydrolases"/>
    <property type="match status" value="1"/>
</dbReference>
<dbReference type="PROSITE" id="PS51709">
    <property type="entry name" value="G_TRME"/>
    <property type="match status" value="1"/>
</dbReference>
<protein>
    <recommendedName>
        <fullName evidence="1">tRNA modification GTPase MnmE</fullName>
        <ecNumber evidence="1">3.6.-.-</ecNumber>
    </recommendedName>
</protein>
<proteinExistence type="inferred from homology"/>
<sequence length="461" mass="49079">MLYDDTIAAIATPPGEGGIGIVRISGRDALKILERIFVPVRPGRWKPYQMRYGRVVDQNGAVVDEALAVFMRGPRSFTAEDTAEISVHGGPLVVERVLQQALAAGARAAAPGEFTMRAFLNGRIDLAQAEATLDIITARTTTALALAEAQLGGWLSQELHRIRDLLMDPLAYCTALVDFPEDEVDPQDIETPLTAAVQALDALVASAQHGIIYRQGARAALIGRPNAGKSSLLNALLRVDRAIVTPIPGTTRDTLEETASLGGVPVVLTDTAGIVESDDPVERLGVARSRQAVRLADLALLVVDVSLPVADDDREIVALTEEKRTILTLNKIDLIDADRSIIAARQREYEQIRGKAFDAMVTVSALTGQGLDELGATVARLLLGAPIAADGRLVTNARHRDALARAADHARDALTGFQQGVSPDLLAVDLTAAINAIGEVTGESVGEDLLHAIFSRFCIGK</sequence>